<accession>Q9WV93</accession>
<proteinExistence type="evidence at protein level"/>
<feature type="chain" id="PRO_0000127218" description="Hairy/enhancer-of-split related with YRPW motif protein 1">
    <location>
        <begin position="1"/>
        <end position="299"/>
    </location>
</feature>
<feature type="domain" description="bHLH" evidence="3">
    <location>
        <begin position="49"/>
        <end position="104"/>
    </location>
</feature>
<feature type="domain" description="Orange" evidence="2">
    <location>
        <begin position="122"/>
        <end position="158"/>
    </location>
</feature>
<feature type="region of interest" description="Disordered" evidence="4">
    <location>
        <begin position="1"/>
        <end position="53"/>
    </location>
</feature>
<feature type="region of interest" description="Transcriptional repression and interaction with NCOR1 and SIN3A" evidence="1">
    <location>
        <begin position="48"/>
        <end position="117"/>
    </location>
</feature>
<feature type="region of interest" description="Disordered" evidence="4">
    <location>
        <begin position="194"/>
        <end position="234"/>
    </location>
</feature>
<feature type="short sequence motif" description="YRPW motif">
    <location>
        <begin position="289"/>
        <end position="292"/>
    </location>
</feature>
<feature type="compositionally biased region" description="Polar residues" evidence="4">
    <location>
        <begin position="28"/>
        <end position="47"/>
    </location>
</feature>
<name>HEY1_MOUSE</name>
<sequence length="299" mass="32063">MKRAHPDYSSSDSELDETIEVEKESADENGNLSSALCSMSPTTSSQVLARKRRRGIIEKRRRDRINNSLSELRRLVPSAFEKQGSAKLEKAEILQMTVDHLKMLHTAGGKGYFDAHALAMDYRSLGFRECLAEVARYLSIIEGLDASDPLLVRLVSHLNNYASQREAASGAHGGLGHIPWGSAFGHHPHIAHPLLLPQNGHGNAGTAASPTEPHHQGRLASAHPEAPALRAPPSGGLGPVLPVVTSASKLSPPLLSSVASLSAFPFSFSSFHLLSPSTPTQAANLGKPYRPWGTEIGAF</sequence>
<evidence type="ECO:0000250" key="1"/>
<evidence type="ECO:0000255" key="2">
    <source>
        <dbReference type="PROSITE-ProRule" id="PRU00380"/>
    </source>
</evidence>
<evidence type="ECO:0000255" key="3">
    <source>
        <dbReference type="PROSITE-ProRule" id="PRU00981"/>
    </source>
</evidence>
<evidence type="ECO:0000256" key="4">
    <source>
        <dbReference type="SAM" id="MobiDB-lite"/>
    </source>
</evidence>
<evidence type="ECO:0000269" key="5">
    <source>
    </source>
</evidence>
<evidence type="ECO:0000269" key="6">
    <source>
    </source>
</evidence>
<evidence type="ECO:0000269" key="7">
    <source>
    </source>
</evidence>
<evidence type="ECO:0000269" key="8">
    <source>
    </source>
</evidence>
<evidence type="ECO:0000269" key="9">
    <source>
    </source>
</evidence>
<evidence type="ECO:0000269" key="10">
    <source>
    </source>
</evidence>
<evidence type="ECO:0000269" key="11">
    <source>
    </source>
</evidence>
<evidence type="ECO:0000269" key="12">
    <source>
    </source>
</evidence>
<evidence type="ECO:0000269" key="13">
    <source>
    </source>
</evidence>
<evidence type="ECO:0000269" key="14">
    <source>
    </source>
</evidence>
<evidence type="ECO:0000269" key="15">
    <source>
    </source>
</evidence>
<evidence type="ECO:0000269" key="16">
    <source>
    </source>
</evidence>
<evidence type="ECO:0000269" key="17">
    <source>
    </source>
</evidence>
<evidence type="ECO:0000269" key="18">
    <source>
    </source>
</evidence>
<evidence type="ECO:0000269" key="19">
    <source>
    </source>
</evidence>
<evidence type="ECO:0000305" key="20"/>
<comment type="function">
    <text evidence="8 11 13 15 16 17 18 19">Transcriptional repressor which binds preferentially to the canonical E box sequence 5'-CACGTG-3'. Downstream effector of Notch signaling required for cardiovascular development. Specifically required for the Notch-induced endocardial epithelial to mesenchymal transition, which is itself criticial for cardiac valve and septum development. May be required in conjunction with HEY2 to specify arterial cell fate or identity. Promotes maintenance of neuronal precursor cells and glial versus neuronal fate specification. Represses transcription by the cardiac transcriptional activators GATA4 and GATA6 and by the neuronal bHLH factors ASCL1/MASH1 and NEUROD4/MATH3.</text>
</comment>
<comment type="subunit">
    <text evidence="1 11 14 17 19">May self-associate (By similarity). Interacts with HES1, NCOR1 and SIN3A (By similarity). Interacts with GATA4, GATA6 and HDAC1 and HEYL. Interacts with CCDC89/BOIP.</text>
</comment>
<comment type="subcellular location">
    <subcellularLocation>
        <location evidence="2 3 10 12">Nucleus</location>
    </subcellularLocation>
</comment>
<comment type="tissue specificity">
    <text evidence="6 13">Expressed in somitic mesoderm, brain, central nervous system, kidney, heart, nasal epithelium, limbs, lung, muscle, ovary and testis.</text>
</comment>
<comment type="developmental stage">
    <text evidence="5 9 13 18 19">Expressed in the developing nervous system, the somites, heart and craniofacial region. Expressed in the myocardium of the atrium at 9.5 dpc and in the atrioventricular cushions from 9.5 dpc to 12.5 dpc. Also expressed in developing and adult retina. Expressed in the ventricular zone of the ventral spinal cord at 12 dpc and in the ventricular zone of the telencephalon at 12 dpc and 15 dpc. Weakly expressed in the cortical plate at 15 dpc.</text>
</comment>
<comment type="induction">
    <text evidence="7 8 10 12">By activation of the Notch signaling pathway.</text>
</comment>
<comment type="similarity">
    <text evidence="20">Belongs to the HEY family.</text>
</comment>
<dbReference type="EMBL" id="AF151521">
    <property type="protein sequence ID" value="AAD38966.1"/>
    <property type="molecule type" value="mRNA"/>
</dbReference>
<dbReference type="CCDS" id="CCDS17232.1"/>
<dbReference type="SMR" id="Q9WV93"/>
<dbReference type="ELM" id="Q9WV93"/>
<dbReference type="FunCoup" id="Q9WV93">
    <property type="interactions" value="2537"/>
</dbReference>
<dbReference type="IntAct" id="Q9WV93">
    <property type="interactions" value="1"/>
</dbReference>
<dbReference type="STRING" id="10090.ENSMUSP00000038014"/>
<dbReference type="iPTMnet" id="Q9WV93"/>
<dbReference type="PhosphoSitePlus" id="Q9WV93"/>
<dbReference type="PaxDb" id="10090-ENSMUSP00000038014"/>
<dbReference type="ProteomicsDB" id="269564"/>
<dbReference type="AGR" id="MGI:1341800"/>
<dbReference type="MGI" id="MGI:1341800">
    <property type="gene designation" value="Hey1"/>
</dbReference>
<dbReference type="eggNOG" id="KOG4304">
    <property type="taxonomic scope" value="Eukaryota"/>
</dbReference>
<dbReference type="InParanoid" id="Q9WV93"/>
<dbReference type="PhylomeDB" id="Q9WV93"/>
<dbReference type="PRO" id="PR:Q9WV93"/>
<dbReference type="Proteomes" id="UP000000589">
    <property type="component" value="Unplaced"/>
</dbReference>
<dbReference type="RNAct" id="Q9WV93">
    <property type="molecule type" value="protein"/>
</dbReference>
<dbReference type="GO" id="GO:0005737">
    <property type="term" value="C:cytoplasm"/>
    <property type="evidence" value="ECO:0000314"/>
    <property type="project" value="UniProtKB"/>
</dbReference>
<dbReference type="GO" id="GO:0005654">
    <property type="term" value="C:nucleoplasm"/>
    <property type="evidence" value="ECO:0000304"/>
    <property type="project" value="Reactome"/>
</dbReference>
<dbReference type="GO" id="GO:0005634">
    <property type="term" value="C:nucleus"/>
    <property type="evidence" value="ECO:0000314"/>
    <property type="project" value="UniProtKB"/>
</dbReference>
<dbReference type="GO" id="GO:0003700">
    <property type="term" value="F:DNA-binding transcription factor activity"/>
    <property type="evidence" value="ECO:0000250"/>
    <property type="project" value="MGI"/>
</dbReference>
<dbReference type="GO" id="GO:0000981">
    <property type="term" value="F:DNA-binding transcription factor activity, RNA polymerase II-specific"/>
    <property type="evidence" value="ECO:0000314"/>
    <property type="project" value="UniProtKB"/>
</dbReference>
<dbReference type="GO" id="GO:0001227">
    <property type="term" value="F:DNA-binding transcription repressor activity, RNA polymerase II-specific"/>
    <property type="evidence" value="ECO:0000314"/>
    <property type="project" value="UniProtKB"/>
</dbReference>
<dbReference type="GO" id="GO:0042802">
    <property type="term" value="F:identical protein binding"/>
    <property type="evidence" value="ECO:0000353"/>
    <property type="project" value="MGI"/>
</dbReference>
<dbReference type="GO" id="GO:0046983">
    <property type="term" value="F:protein dimerization activity"/>
    <property type="evidence" value="ECO:0007669"/>
    <property type="project" value="InterPro"/>
</dbReference>
<dbReference type="GO" id="GO:0043565">
    <property type="term" value="F:sequence-specific DNA binding"/>
    <property type="evidence" value="ECO:0000314"/>
    <property type="project" value="MGI"/>
</dbReference>
<dbReference type="GO" id="GO:0009948">
    <property type="term" value="P:anterior/posterior axis specification"/>
    <property type="evidence" value="ECO:0000316"/>
    <property type="project" value="MGI"/>
</dbReference>
<dbReference type="GO" id="GO:0003180">
    <property type="term" value="P:aortic valve morphogenesis"/>
    <property type="evidence" value="ECO:0000314"/>
    <property type="project" value="BHF-UCL"/>
</dbReference>
<dbReference type="GO" id="GO:0060842">
    <property type="term" value="P:arterial endothelial cell differentiation"/>
    <property type="evidence" value="ECO:0000316"/>
    <property type="project" value="BHF-UCL"/>
</dbReference>
<dbReference type="GO" id="GO:0060840">
    <property type="term" value="P:artery development"/>
    <property type="evidence" value="ECO:0000316"/>
    <property type="project" value="MGI"/>
</dbReference>
<dbReference type="GO" id="GO:0003190">
    <property type="term" value="P:atrioventricular valve formation"/>
    <property type="evidence" value="ECO:0000315"/>
    <property type="project" value="BHF-UCL"/>
</dbReference>
<dbReference type="GO" id="GO:0003181">
    <property type="term" value="P:atrioventricular valve morphogenesis"/>
    <property type="evidence" value="ECO:0000316"/>
    <property type="project" value="BHF-UCL"/>
</dbReference>
<dbReference type="GO" id="GO:0001568">
    <property type="term" value="P:blood vessel development"/>
    <property type="evidence" value="ECO:0000316"/>
    <property type="project" value="MGI"/>
</dbReference>
<dbReference type="GO" id="GO:0060837">
    <property type="term" value="P:blood vessel endothelial cell differentiation"/>
    <property type="evidence" value="ECO:0000316"/>
    <property type="project" value="MGI"/>
</dbReference>
<dbReference type="GO" id="GO:0060317">
    <property type="term" value="P:cardiac epithelial to mesenchymal transition"/>
    <property type="evidence" value="ECO:0000316"/>
    <property type="project" value="BHF-UCL"/>
</dbReference>
<dbReference type="GO" id="GO:0060411">
    <property type="term" value="P:cardiac septum morphogenesis"/>
    <property type="evidence" value="ECO:0000315"/>
    <property type="project" value="BHF-UCL"/>
</dbReference>
<dbReference type="GO" id="GO:0003208">
    <property type="term" value="P:cardiac ventricle morphogenesis"/>
    <property type="evidence" value="ECO:0000315"/>
    <property type="project" value="BHF-UCL"/>
</dbReference>
<dbReference type="GO" id="GO:0072049">
    <property type="term" value="P:comma-shaped body morphogenesis"/>
    <property type="evidence" value="ECO:0000270"/>
    <property type="project" value="UniProtKB"/>
</dbReference>
<dbReference type="GO" id="GO:0035912">
    <property type="term" value="P:dorsal aorta morphogenesis"/>
    <property type="evidence" value="ECO:0000316"/>
    <property type="project" value="BHF-UCL"/>
</dbReference>
<dbReference type="GO" id="GO:0003203">
    <property type="term" value="P:endocardial cushion morphogenesis"/>
    <property type="evidence" value="ECO:0000316"/>
    <property type="project" value="BHF-UCL"/>
</dbReference>
<dbReference type="GO" id="GO:0003199">
    <property type="term" value="P:endocardial cushion to mesenchymal transition involved in heart valve formation"/>
    <property type="evidence" value="ECO:0000316"/>
    <property type="project" value="MGI"/>
</dbReference>
<dbReference type="GO" id="GO:0003198">
    <property type="term" value="P:epithelial to mesenchymal transition involved in endocardial cushion formation"/>
    <property type="evidence" value="ECO:0000316"/>
    <property type="project" value="MGI"/>
</dbReference>
<dbReference type="GO" id="GO:0090162">
    <property type="term" value="P:establishment of epithelial cell polarity"/>
    <property type="evidence" value="ECO:0000316"/>
    <property type="project" value="MGI"/>
</dbReference>
<dbReference type="GO" id="GO:0060122">
    <property type="term" value="P:inner ear receptor cell stereocilium organization"/>
    <property type="evidence" value="ECO:0000316"/>
    <property type="project" value="MGI"/>
</dbReference>
<dbReference type="GO" id="GO:0060716">
    <property type="term" value="P:labyrinthine layer blood vessel development"/>
    <property type="evidence" value="ECO:0000316"/>
    <property type="project" value="BHF-UCL"/>
</dbReference>
<dbReference type="GO" id="GO:0014031">
    <property type="term" value="P:mesenchymal cell development"/>
    <property type="evidence" value="ECO:0000316"/>
    <property type="project" value="BHF-UCL"/>
</dbReference>
<dbReference type="GO" id="GO:0070168">
    <property type="term" value="P:negative regulation of biomineral tissue development"/>
    <property type="evidence" value="ECO:0000314"/>
    <property type="project" value="BHF-UCL"/>
</dbReference>
<dbReference type="GO" id="GO:0045892">
    <property type="term" value="P:negative regulation of DNA-templated transcription"/>
    <property type="evidence" value="ECO:0000315"/>
    <property type="project" value="UniProtKB"/>
</dbReference>
<dbReference type="GO" id="GO:0010629">
    <property type="term" value="P:negative regulation of gene expression"/>
    <property type="evidence" value="ECO:0000314"/>
    <property type="project" value="BHF-UCL"/>
</dbReference>
<dbReference type="GO" id="GO:0045665">
    <property type="term" value="P:negative regulation of neuron differentiation"/>
    <property type="evidence" value="ECO:0000315"/>
    <property type="project" value="UniProtKB"/>
</dbReference>
<dbReference type="GO" id="GO:0000122">
    <property type="term" value="P:negative regulation of transcription by RNA polymerase II"/>
    <property type="evidence" value="ECO:0000314"/>
    <property type="project" value="UniProtKB"/>
</dbReference>
<dbReference type="GO" id="GO:0007219">
    <property type="term" value="P:Notch signaling pathway"/>
    <property type="evidence" value="ECO:0000314"/>
    <property type="project" value="UniProtKB"/>
</dbReference>
<dbReference type="GO" id="GO:0002076">
    <property type="term" value="P:osteoblast development"/>
    <property type="evidence" value="ECO:0000316"/>
    <property type="project" value="MGI"/>
</dbReference>
<dbReference type="GO" id="GO:0003151">
    <property type="term" value="P:outflow tract morphogenesis"/>
    <property type="evidence" value="ECO:0000316"/>
    <property type="project" value="BHF-UCL"/>
</dbReference>
<dbReference type="GO" id="GO:0045669">
    <property type="term" value="P:positive regulation of osteoblast differentiation"/>
    <property type="evidence" value="ECO:0000316"/>
    <property type="project" value="MGI"/>
</dbReference>
<dbReference type="GO" id="GO:0045944">
    <property type="term" value="P:positive regulation of transcription by RNA polymerase II"/>
    <property type="evidence" value="ECO:0000314"/>
    <property type="project" value="BHF-UCL"/>
</dbReference>
<dbReference type="GO" id="GO:0003184">
    <property type="term" value="P:pulmonary valve morphogenesis"/>
    <property type="evidence" value="ECO:0000316"/>
    <property type="project" value="BHF-UCL"/>
</dbReference>
<dbReference type="GO" id="GO:0050678">
    <property type="term" value="P:regulation of epithelial cell proliferation"/>
    <property type="evidence" value="ECO:0000316"/>
    <property type="project" value="MGI"/>
</dbReference>
<dbReference type="GO" id="GO:0045607">
    <property type="term" value="P:regulation of inner ear auditory receptor cell differentiation"/>
    <property type="evidence" value="ECO:0000316"/>
    <property type="project" value="MGI"/>
</dbReference>
<dbReference type="GO" id="GO:2001212">
    <property type="term" value="P:regulation of vasculogenesis"/>
    <property type="evidence" value="ECO:0000316"/>
    <property type="project" value="BHF-UCL"/>
</dbReference>
<dbReference type="GO" id="GO:0072087">
    <property type="term" value="P:renal vesicle development"/>
    <property type="evidence" value="ECO:0000270"/>
    <property type="project" value="UniProtKB"/>
</dbReference>
<dbReference type="GO" id="GO:0072050">
    <property type="term" value="P:S-shaped body morphogenesis"/>
    <property type="evidence" value="ECO:0000270"/>
    <property type="project" value="UniProtKB"/>
</dbReference>
<dbReference type="GO" id="GO:0036304">
    <property type="term" value="P:umbilical cord morphogenesis"/>
    <property type="evidence" value="ECO:0000316"/>
    <property type="project" value="BHF-UCL"/>
</dbReference>
<dbReference type="GO" id="GO:0060675">
    <property type="term" value="P:ureteric bud morphogenesis"/>
    <property type="evidence" value="ECO:0000270"/>
    <property type="project" value="UniProtKB"/>
</dbReference>
<dbReference type="GO" id="GO:0001570">
    <property type="term" value="P:vasculogenesis"/>
    <property type="evidence" value="ECO:0000316"/>
    <property type="project" value="MGI"/>
</dbReference>
<dbReference type="GO" id="GO:0060412">
    <property type="term" value="P:ventricular septum morphogenesis"/>
    <property type="evidence" value="ECO:0000316"/>
    <property type="project" value="BHF-UCL"/>
</dbReference>
<dbReference type="GO" id="GO:0003222">
    <property type="term" value="P:ventricular trabecula myocardium morphogenesis"/>
    <property type="evidence" value="ECO:0000316"/>
    <property type="project" value="MGI"/>
</dbReference>
<dbReference type="FunFam" id="4.10.280.10:FF:000012">
    <property type="entry name" value="hairy/enhancer-of-split related with YRPW motif protein 1"/>
    <property type="match status" value="1"/>
</dbReference>
<dbReference type="Gene3D" id="6.10.250.980">
    <property type="match status" value="1"/>
</dbReference>
<dbReference type="Gene3D" id="4.10.280.10">
    <property type="entry name" value="Helix-loop-helix DNA-binding domain"/>
    <property type="match status" value="1"/>
</dbReference>
<dbReference type="InterPro" id="IPR011598">
    <property type="entry name" value="bHLH_dom"/>
</dbReference>
<dbReference type="InterPro" id="IPR050370">
    <property type="entry name" value="HES_HEY"/>
</dbReference>
<dbReference type="InterPro" id="IPR036638">
    <property type="entry name" value="HLH_DNA-bd_sf"/>
</dbReference>
<dbReference type="InterPro" id="IPR003650">
    <property type="entry name" value="Orange_dom"/>
</dbReference>
<dbReference type="PANTHER" id="PTHR10985">
    <property type="entry name" value="BASIC HELIX-LOOP-HELIX TRANSCRIPTION FACTOR, HES-RELATED"/>
    <property type="match status" value="1"/>
</dbReference>
<dbReference type="Pfam" id="PF07527">
    <property type="entry name" value="Hairy_orange"/>
    <property type="match status" value="1"/>
</dbReference>
<dbReference type="Pfam" id="PF00010">
    <property type="entry name" value="HLH"/>
    <property type="match status" value="1"/>
</dbReference>
<dbReference type="SMART" id="SM00353">
    <property type="entry name" value="HLH"/>
    <property type="match status" value="1"/>
</dbReference>
<dbReference type="SMART" id="SM00511">
    <property type="entry name" value="ORANGE"/>
    <property type="match status" value="1"/>
</dbReference>
<dbReference type="SUPFAM" id="SSF47459">
    <property type="entry name" value="HLH, helix-loop-helix DNA-binding domain"/>
    <property type="match status" value="1"/>
</dbReference>
<dbReference type="SUPFAM" id="SSF158457">
    <property type="entry name" value="Orange domain-like"/>
    <property type="match status" value="1"/>
</dbReference>
<dbReference type="PROSITE" id="PS50888">
    <property type="entry name" value="BHLH"/>
    <property type="match status" value="1"/>
</dbReference>
<dbReference type="PROSITE" id="PS51054">
    <property type="entry name" value="ORANGE"/>
    <property type="match status" value="1"/>
</dbReference>
<protein>
    <recommendedName>
        <fullName>Hairy/enhancer-of-split related with YRPW motif protein 1</fullName>
    </recommendedName>
    <alternativeName>
        <fullName>Hairy and enhancer of split-related protein 1</fullName>
        <shortName>HESR-1</shortName>
    </alternativeName>
    <alternativeName>
        <fullName>Hairy-related transcription factor 1</fullName>
        <shortName>HRT-1</shortName>
        <shortName>mHRT1</shortName>
    </alternativeName>
</protein>
<reference key="1">
    <citation type="journal article" date="1999" name="Biochem. Biophys. Res. Commun.">
        <title>Identification and expression of a novel family of bHLH cDNAs related to Drosophila hairy and enhancer of split.</title>
        <authorList>
            <person name="Kokubo H."/>
            <person name="Lun Y."/>
            <person name="Johnson R.L."/>
        </authorList>
    </citation>
    <scope>NUCLEOTIDE SEQUENCE [MRNA]</scope>
    <source>
        <strain>C57BL/6J</strain>
    </source>
</reference>
<reference key="2">
    <citation type="journal article" date="1999" name="Mech. Dev.">
        <title>Hey genes: a novel subfamily of hairy- and enhancer of split related genes specifically expressed during mouse embryogenesis.</title>
        <authorList>
            <person name="Leimeister C."/>
            <person name="Externbrinck A."/>
            <person name="Klamt B."/>
            <person name="Gessler M."/>
        </authorList>
    </citation>
    <scope>DEVELOPMENTAL STAGE</scope>
</reference>
<reference key="3">
    <citation type="journal article" date="2000" name="Biochem. Biophys. Res. Commun.">
        <title>Comparative analysis of the human and mouse Hey1 promoter: Hey genes are new Notch target genes.</title>
        <authorList>
            <person name="Maier M.M."/>
            <person name="Gessler M."/>
        </authorList>
    </citation>
    <scope>INDUCTION</scope>
</reference>
<reference key="4">
    <citation type="journal article" date="2000" name="Genomics">
        <title>Characterization of the human and mouse HEY1, HEY2, and HEYL genes: cloning, mapping, and mutation screening of a new bHLH gene family.</title>
        <authorList>
            <person name="Steidl C."/>
            <person name="Leimeister C."/>
            <person name="Klamt B."/>
            <person name="Maier M."/>
            <person name="Nanda I."/>
            <person name="Dixon M."/>
            <person name="Clarke R."/>
            <person name="Schmid M."/>
            <person name="Gessler M."/>
        </authorList>
    </citation>
    <scope>TISSUE SPECIFICITY</scope>
</reference>
<reference key="5">
    <citation type="journal article" date="2000" name="Proc. Natl. Acad. Sci. U.S.A.">
        <title>Members of the HRT family of basic helix-loop-helix proteins act as transcriptional repressors downstream of Notch signaling.</title>
        <authorList>
            <person name="Nakagawa O."/>
            <person name="McFadden D.G."/>
            <person name="Nakagawa M."/>
            <person name="Yanagisawa H."/>
            <person name="Hu T."/>
            <person name="Srivastava D."/>
            <person name="Olson E.N."/>
        </authorList>
    </citation>
    <scope>FUNCTION</scope>
    <scope>INDUCTION</scope>
</reference>
<reference key="6">
    <citation type="journal article" date="2001" name="J. Neurosci.">
        <title>The basic helix-loop-helix gene hesr2 promotes gliogenesis in mouse retina.</title>
        <authorList>
            <person name="Satow T."/>
            <person name="Bae S.-K."/>
            <person name="Inoue T."/>
            <person name="Inoue C."/>
            <person name="Miyoshi G."/>
            <person name="Tomita K."/>
            <person name="Bessho Y."/>
            <person name="Hashimoto N."/>
            <person name="Kageyama R."/>
        </authorList>
    </citation>
    <scope>DEVELOPMENTAL STAGE</scope>
</reference>
<reference key="7">
    <citation type="journal article" date="2001" name="Mol. Cell. Biol.">
        <title>HERP, a new primary target of Notch regulated by ligand binding.</title>
        <authorList>
            <person name="Iso T."/>
            <person name="Sartorelli V."/>
            <person name="Chung G."/>
            <person name="Shichinohe T."/>
            <person name="Kedes L."/>
            <person name="Hamamori Y."/>
        </authorList>
    </citation>
    <scope>SUBCELLULAR LOCATION</scope>
    <scope>INDUCTION</scope>
</reference>
<reference key="8">
    <citation type="journal article" date="2001" name="Mol. Cell. Biol.">
        <title>HERP, a novel heterodimer partner of HES/E(spl) in Notch signaling.</title>
        <authorList>
            <person name="Iso T."/>
            <person name="Sartorelli V."/>
            <person name="Poizat C."/>
            <person name="Iezzi S."/>
            <person name="Wu H.-Y."/>
            <person name="Chung G."/>
            <person name="Kedes L."/>
            <person name="Hamamori Y."/>
        </authorList>
    </citation>
    <scope>FUNCTION</scope>
    <scope>INTERACTION WITH HDAC1</scope>
</reference>
<reference key="9">
    <citation type="journal article" date="2002" name="J. Biol. Chem.">
        <title>HERP1 is a cell type-specific primary target of Notch.</title>
        <authorList>
            <person name="Iso T."/>
            <person name="Chung G."/>
            <person name="Hamamori Y."/>
            <person name="Kedes L."/>
        </authorList>
    </citation>
    <scope>INDUCTION</scope>
    <scope>SUBCELLULAR LOCATION</scope>
</reference>
<reference key="10">
    <citation type="journal article" date="2003" name="Dev. Dyn.">
        <title>Identification of BOIP, a novel cDNA highly expressed during spermatogenesis that encodes a protein interacting with the orange domain of the hairy-related transcription factor HRT1/Hey1 in Xenopus and mouse.</title>
        <authorList>
            <person name="Van Wayenbergh R."/>
            <person name="Taelman V."/>
            <person name="Pichon B."/>
            <person name="Fischer A."/>
            <person name="Kricha S."/>
            <person name="Gessler M."/>
            <person name="Christophe D."/>
            <person name="Bellefroid E.J."/>
        </authorList>
    </citation>
    <scope>INTERACTION WITH CCDC89</scope>
</reference>
<reference key="11">
    <citation type="journal article" date="2003" name="J. Biol. Chem.">
        <title>The basic helix-loop-helix genes Hesr1/Hey1 and Hesr2/Hey2 regulate maintenance of neural precursor cells in the brain.</title>
        <authorList>
            <person name="Sakamoto M."/>
            <person name="Hirata H."/>
            <person name="Ohtsuka T."/>
            <person name="Bessho Y."/>
            <person name="Kageyama R."/>
        </authorList>
    </citation>
    <scope>FUNCTION</scope>
    <scope>TISSUE SPECIFICITY</scope>
    <scope>DEVELOPMENTAL STAGE</scope>
</reference>
<reference key="12">
    <citation type="journal article" date="2004" name="Genes Dev.">
        <title>The Notch target genes Hey1 and Hey2 are required for embryonic vascular development.</title>
        <authorList>
            <person name="Fischer A."/>
            <person name="Schumacher N."/>
            <person name="Maier M."/>
            <person name="Sendtner M."/>
            <person name="Gessler M."/>
        </authorList>
    </citation>
    <scope>FUNCTION</scope>
</reference>
<reference key="13">
    <citation type="journal article" date="2005" name="Dev. Biol.">
        <title>Mouse hesr1 and hesr2 genes are redundantly required to mediate Notch signaling in the developing cardiovascular system.</title>
        <authorList>
            <person name="Kokubo H."/>
            <person name="Miyagawa-Tomita S."/>
            <person name="Nakazawa M."/>
            <person name="Saga Y."/>
            <person name="Johnson R.L."/>
        </authorList>
    </citation>
    <scope>FUNCTION</scope>
</reference>
<reference key="14">
    <citation type="journal article" date="2005" name="Mol. Cell. Biol.">
        <title>Hey basic helix-loop-helix transcription factors are repressors of GATA4 and GATA6 and restrict expression of the GATA target gene ANF in fetal hearts.</title>
        <authorList>
            <person name="Fischer A."/>
            <person name="Klattig J."/>
            <person name="Kneitz B."/>
            <person name="Diez H."/>
            <person name="Maier M."/>
            <person name="Holtmann B."/>
            <person name="Englert C."/>
            <person name="Gessler M."/>
        </authorList>
    </citation>
    <scope>FUNCTION</scope>
    <scope>INTERACTION WITH GATA4 AND GATA6</scope>
</reference>
<reference key="15">
    <citation type="journal article" date="2007" name="Circ. Res.">
        <title>Combined loss of Hey1 and HeyL causes congenital heart defects because of impaired epithelial to mesenchymal transition.</title>
        <authorList>
            <person name="Fischer A."/>
            <person name="Steidl C."/>
            <person name="Wagner T.U."/>
            <person name="Lang E."/>
            <person name="Jakob P.M."/>
            <person name="Friedl P."/>
            <person name="Knobeloch K.-P."/>
            <person name="Gessler M."/>
        </authorList>
    </citation>
    <scope>FUNCTION</scope>
    <scope>INTERACTION WITH HEYL</scope>
    <scope>DEVELOPMENTAL STAGE</scope>
</reference>
<reference key="16">
    <citation type="journal article" date="2007" name="Development">
        <title>Hesr1 and Hesr2 regulate atrioventricular boundary formation in the developing heart through the repression of Tbx2.</title>
        <authorList>
            <person name="Kokubo H."/>
            <person name="Tomita-Miyagawa S."/>
            <person name="Hamada Y."/>
            <person name="Saga Y."/>
        </authorList>
    </citation>
    <scope>FUNCTION</scope>
    <scope>DEVELOPMENTAL STAGE</scope>
</reference>
<keyword id="KW-0217">Developmental protein</keyword>
<keyword id="KW-0238">DNA-binding</keyword>
<keyword id="KW-0914">Notch signaling pathway</keyword>
<keyword id="KW-0539">Nucleus</keyword>
<keyword id="KW-1185">Reference proteome</keyword>
<keyword id="KW-0678">Repressor</keyword>
<keyword id="KW-0804">Transcription</keyword>
<keyword id="KW-0805">Transcription regulation</keyword>
<organism>
    <name type="scientific">Mus musculus</name>
    <name type="common">Mouse</name>
    <dbReference type="NCBI Taxonomy" id="10090"/>
    <lineage>
        <taxon>Eukaryota</taxon>
        <taxon>Metazoa</taxon>
        <taxon>Chordata</taxon>
        <taxon>Craniata</taxon>
        <taxon>Vertebrata</taxon>
        <taxon>Euteleostomi</taxon>
        <taxon>Mammalia</taxon>
        <taxon>Eutheria</taxon>
        <taxon>Euarchontoglires</taxon>
        <taxon>Glires</taxon>
        <taxon>Rodentia</taxon>
        <taxon>Myomorpha</taxon>
        <taxon>Muroidea</taxon>
        <taxon>Muridae</taxon>
        <taxon>Murinae</taxon>
        <taxon>Mus</taxon>
        <taxon>Mus</taxon>
    </lineage>
</organism>
<gene>
    <name type="primary">Hey1</name>
    <name type="synonym">Herp2</name>
    <name type="synonym">Hesr1</name>
    <name type="synonym">Hrt1</name>
</gene>